<accession>P36493</accession>
<accession>Q2A7C0</accession>
<accession>Q2MI52</accession>
<name>RK32_SOLLC</name>
<proteinExistence type="inferred from homology"/>
<protein>
    <recommendedName>
        <fullName evidence="1">Large ribosomal subunit protein bL32c</fullName>
    </recommendedName>
    <alternativeName>
        <fullName>50S ribosomal protein L32, chloroplastic</fullName>
    </alternativeName>
</protein>
<sequence length="55" mass="6402">MAVPKKRTSTSKKRIRKNIWKRKGYWVALKAFSLAKSLSTGNSKSFFVRQTKINK</sequence>
<geneLocation type="chloroplast"/>
<evidence type="ECO:0000305" key="1"/>
<comment type="subcellular location">
    <subcellularLocation>
        <location>Plastid</location>
        <location>Chloroplast</location>
    </subcellularLocation>
</comment>
<comment type="similarity">
    <text evidence="1">Belongs to the bacterial ribosomal protein bL32 family.</text>
</comment>
<feature type="chain" id="PRO_0000172462" description="Large ribosomal subunit protein bL32c">
    <location>
        <begin position="1"/>
        <end position="55"/>
    </location>
</feature>
<gene>
    <name type="primary">rpl32</name>
</gene>
<keyword id="KW-0150">Chloroplast</keyword>
<keyword id="KW-0934">Plastid</keyword>
<keyword id="KW-1185">Reference proteome</keyword>
<keyword id="KW-0687">Ribonucleoprotein</keyword>
<keyword id="KW-0689">Ribosomal protein</keyword>
<reference key="1">
    <citation type="journal article" date="2006" name="Theor. Appl. Genet.">
        <title>Complete chloroplast genome sequences of Solanum bulbocastanum, Solanum lycopersicum and comparative analyses with other Solanaceae genomes.</title>
        <authorList>
            <person name="Daniell H."/>
            <person name="Lee S.-B."/>
            <person name="Grevich J."/>
            <person name="Saski C."/>
            <person name="Quesada-Vargas T."/>
            <person name="Guda C."/>
            <person name="Tomkins J."/>
            <person name="Jansen R.K."/>
        </authorList>
    </citation>
    <scope>NUCLEOTIDE SEQUENCE [LARGE SCALE GENOMIC DNA]</scope>
    <source>
        <strain>cv. LA3023</strain>
    </source>
</reference>
<reference key="2">
    <citation type="journal article" date="2006" name="J. Mol. Evol.">
        <title>Sequence of the tomato chloroplast DNA and evolutionary comparison of solanaceous plastid genomes.</title>
        <authorList>
            <person name="Kahlau S."/>
            <person name="Aspinall S."/>
            <person name="Gray J.C."/>
            <person name="Bock R."/>
        </authorList>
    </citation>
    <scope>NUCLEOTIDE SEQUENCE [LARGE SCALE GENOMIC DNA]</scope>
    <source>
        <strain>cv. IPA-6</strain>
    </source>
</reference>
<reference key="3">
    <citation type="journal article" date="1994" name="EMBO J.">
        <title>A novel RNA gene in the tobacco plastid genome: its possible role in the maturation of 16S rRNA.</title>
        <authorList>
            <person name="Vera A."/>
            <person name="Sugiura M."/>
        </authorList>
    </citation>
    <scope>NUCLEOTIDE SEQUENCE [GENOMIC DNA] OF 12-55</scope>
    <source>
        <strain>cv. VFNT Cherry LA1221</strain>
    </source>
</reference>
<dbReference type="EMBL" id="DQ347959">
    <property type="protein sequence ID" value="ABC56349.1"/>
    <property type="molecule type" value="Genomic_DNA"/>
</dbReference>
<dbReference type="EMBL" id="AM087200">
    <property type="protein sequence ID" value="CAJ32443.1"/>
    <property type="molecule type" value="Genomic_DNA"/>
</dbReference>
<dbReference type="EMBL" id="D17805">
    <property type="protein sequence ID" value="BAA04629.1"/>
    <property type="molecule type" value="Genomic_DNA"/>
</dbReference>
<dbReference type="PIR" id="T07762">
    <property type="entry name" value="T07762"/>
</dbReference>
<dbReference type="RefSeq" id="AP_004977.1">
    <property type="nucleotide sequence ID" value="AC_000188.1"/>
</dbReference>
<dbReference type="RefSeq" id="YP_008563137.1">
    <property type="nucleotide sequence ID" value="NC_007898.3"/>
</dbReference>
<dbReference type="SMR" id="P36493"/>
<dbReference type="FunCoup" id="P36493">
    <property type="interactions" value="322"/>
</dbReference>
<dbReference type="STRING" id="4081.P36493"/>
<dbReference type="PaxDb" id="4081-Solyc03g013610.1.1"/>
<dbReference type="GeneID" id="3950456"/>
<dbReference type="KEGG" id="sly:3950456"/>
<dbReference type="InParanoid" id="P36493"/>
<dbReference type="OrthoDB" id="1938523at2759"/>
<dbReference type="Proteomes" id="UP000004994">
    <property type="component" value="Chloroplast"/>
</dbReference>
<dbReference type="GO" id="GO:0009507">
    <property type="term" value="C:chloroplast"/>
    <property type="evidence" value="ECO:0007669"/>
    <property type="project" value="UniProtKB-SubCell"/>
</dbReference>
<dbReference type="GO" id="GO:0015934">
    <property type="term" value="C:large ribosomal subunit"/>
    <property type="evidence" value="ECO:0007669"/>
    <property type="project" value="InterPro"/>
</dbReference>
<dbReference type="GO" id="GO:0003735">
    <property type="term" value="F:structural constituent of ribosome"/>
    <property type="evidence" value="ECO:0007669"/>
    <property type="project" value="InterPro"/>
</dbReference>
<dbReference type="GO" id="GO:0006412">
    <property type="term" value="P:translation"/>
    <property type="evidence" value="ECO:0007669"/>
    <property type="project" value="UniProtKB-UniRule"/>
</dbReference>
<dbReference type="HAMAP" id="MF_00340">
    <property type="entry name" value="Ribosomal_bL32"/>
    <property type="match status" value="1"/>
</dbReference>
<dbReference type="InterPro" id="IPR002677">
    <property type="entry name" value="Ribosomal_bL32"/>
</dbReference>
<dbReference type="InterPro" id="IPR044958">
    <property type="entry name" value="Ribosomal_bL32_plant/cyanobact"/>
</dbReference>
<dbReference type="InterPro" id="IPR011332">
    <property type="entry name" value="Ribosomal_zn-bd"/>
</dbReference>
<dbReference type="PANTHER" id="PTHR36083">
    <property type="entry name" value="50S RIBOSOMAL PROTEIN L32, CHLOROPLASTIC"/>
    <property type="match status" value="1"/>
</dbReference>
<dbReference type="PANTHER" id="PTHR36083:SF1">
    <property type="entry name" value="LARGE RIBOSOMAL SUBUNIT PROTEIN BL32C"/>
    <property type="match status" value="1"/>
</dbReference>
<dbReference type="Pfam" id="PF01783">
    <property type="entry name" value="Ribosomal_L32p"/>
    <property type="match status" value="1"/>
</dbReference>
<dbReference type="SUPFAM" id="SSF57829">
    <property type="entry name" value="Zn-binding ribosomal proteins"/>
    <property type="match status" value="1"/>
</dbReference>
<organism>
    <name type="scientific">Solanum lycopersicum</name>
    <name type="common">Tomato</name>
    <name type="synonym">Lycopersicon esculentum</name>
    <dbReference type="NCBI Taxonomy" id="4081"/>
    <lineage>
        <taxon>Eukaryota</taxon>
        <taxon>Viridiplantae</taxon>
        <taxon>Streptophyta</taxon>
        <taxon>Embryophyta</taxon>
        <taxon>Tracheophyta</taxon>
        <taxon>Spermatophyta</taxon>
        <taxon>Magnoliopsida</taxon>
        <taxon>eudicotyledons</taxon>
        <taxon>Gunneridae</taxon>
        <taxon>Pentapetalae</taxon>
        <taxon>asterids</taxon>
        <taxon>lamiids</taxon>
        <taxon>Solanales</taxon>
        <taxon>Solanaceae</taxon>
        <taxon>Solanoideae</taxon>
        <taxon>Solaneae</taxon>
        <taxon>Solanum</taxon>
        <taxon>Solanum subgen. Lycopersicon</taxon>
    </lineage>
</organism>